<protein>
    <recommendedName>
        <fullName evidence="1">ATP synthase subunit beta, chloroplastic</fullName>
        <ecNumber evidence="1">7.1.2.2</ecNumber>
    </recommendedName>
    <alternativeName>
        <fullName evidence="1">ATP synthase F1 sector subunit beta</fullName>
    </alternativeName>
    <alternativeName>
        <fullName evidence="1">F-ATPase subunit beta</fullName>
    </alternativeName>
</protein>
<organism>
    <name type="scientific">Liriodendron tulipifera</name>
    <name type="common">Tuliptree</name>
    <name type="synonym">Tulip poplar</name>
    <dbReference type="NCBI Taxonomy" id="3415"/>
    <lineage>
        <taxon>Eukaryota</taxon>
        <taxon>Viridiplantae</taxon>
        <taxon>Streptophyta</taxon>
        <taxon>Embryophyta</taxon>
        <taxon>Tracheophyta</taxon>
        <taxon>Spermatophyta</taxon>
        <taxon>Magnoliopsida</taxon>
        <taxon>Magnoliidae</taxon>
        <taxon>Magnoliales</taxon>
        <taxon>Magnoliaceae</taxon>
        <taxon>Liriodendron</taxon>
    </lineage>
</organism>
<feature type="chain" id="PRO_0000254495" description="ATP synthase subunit beta, chloroplastic">
    <location>
        <begin position="1"/>
        <end position="498"/>
    </location>
</feature>
<feature type="binding site" evidence="1">
    <location>
        <begin position="172"/>
        <end position="179"/>
    </location>
    <ligand>
        <name>ATP</name>
        <dbReference type="ChEBI" id="CHEBI:30616"/>
    </ligand>
</feature>
<feature type="sequence conflict" description="In Ref. 1; CAB89716." evidence="2" ref="1">
    <original>E</original>
    <variation>K</variation>
    <location>
        <position position="17"/>
    </location>
</feature>
<feature type="sequence conflict" description="In Ref. 1; CAB89716." evidence="2" ref="1">
    <original>EV</original>
    <variation>KM</variation>
    <location>
        <begin position="491"/>
        <end position="492"/>
    </location>
</feature>
<feature type="sequence conflict" description="In Ref. 1; CAB89716." evidence="2" ref="1">
    <original>K</original>
    <variation>N</variation>
    <location>
        <position position="495"/>
    </location>
</feature>
<geneLocation type="chloroplast"/>
<comment type="function">
    <text evidence="1">Produces ATP from ADP in the presence of a proton gradient across the membrane. The catalytic sites are hosted primarily by the beta subunits.</text>
</comment>
<comment type="catalytic activity">
    <reaction evidence="1">
        <text>ATP + H2O + 4 H(+)(in) = ADP + phosphate + 5 H(+)(out)</text>
        <dbReference type="Rhea" id="RHEA:57720"/>
        <dbReference type="ChEBI" id="CHEBI:15377"/>
        <dbReference type="ChEBI" id="CHEBI:15378"/>
        <dbReference type="ChEBI" id="CHEBI:30616"/>
        <dbReference type="ChEBI" id="CHEBI:43474"/>
        <dbReference type="ChEBI" id="CHEBI:456216"/>
        <dbReference type="EC" id="7.1.2.2"/>
    </reaction>
</comment>
<comment type="subunit">
    <text evidence="1">F-type ATPases have 2 components, CF(1) - the catalytic core - and CF(0) - the membrane proton channel. CF(1) has five subunits: alpha(3), beta(3), gamma(1), delta(1), epsilon(1). CF(0) has four main subunits: a(1), b(1), b'(1) and c(9-12).</text>
</comment>
<comment type="subcellular location">
    <subcellularLocation>
        <location evidence="1">Plastid</location>
        <location evidence="1">Chloroplast thylakoid membrane</location>
        <topology evidence="1">Peripheral membrane protein</topology>
    </subcellularLocation>
</comment>
<comment type="similarity">
    <text evidence="1">Belongs to the ATPase alpha/beta chains family.</text>
</comment>
<keyword id="KW-0066">ATP synthesis</keyword>
<keyword id="KW-0067">ATP-binding</keyword>
<keyword id="KW-0139">CF(1)</keyword>
<keyword id="KW-0150">Chloroplast</keyword>
<keyword id="KW-0375">Hydrogen ion transport</keyword>
<keyword id="KW-0406">Ion transport</keyword>
<keyword id="KW-0472">Membrane</keyword>
<keyword id="KW-0547">Nucleotide-binding</keyword>
<keyword id="KW-0934">Plastid</keyword>
<keyword id="KW-0793">Thylakoid</keyword>
<keyword id="KW-1278">Translocase</keyword>
<keyword id="KW-0813">Transport</keyword>
<sequence length="498" mass="53714">MRINPTTSSPGVSTLEEKNLGRIVQIIGPVLDVAFPPGKMPNIYNALVVKGRDTVGQQINVTCEVQQLLGNNRVRAVAMSATDGLMRGMEVIDTGAPLSVPVGGATLGRIFNVLGEPVDNLGPVDTRTTSPIHRSAPAFIQLDTKLSIFETGIKVVDLLAPYRRGGKIGLFGGAGVGKTVLIMELINNIAKAHGGVSVFGGVGERTREGNDLYMEMKESGVINEQNIAESKVALVYGQMNEPPGARMRVGLTALTMAEYFRDVNEQDVLLFIDNIFRFVQAGSEVSALLGRMPSAVGYQPTLSTEMGSLQERITSTKEGSITSIQAVYVPADDLTDPAPATTFAHLDATTVLSRGLAAKGIYPAVDPLDSTSTMLQPRIVGEEHYETAQRVKQTSQRYKELQDIIAILGLDELSEEDRLTVARARKIERFLSQPFFVAEVFTGSPGKYVGLAETIRGFQLILSGELDGLPEQAFYLVGNIDEATAKAMNLEVESKLKK</sequence>
<accession>Q9MU43</accession>
<accession>Q0G9L2</accession>
<gene>
    <name evidence="1" type="primary">atpB</name>
</gene>
<evidence type="ECO:0000255" key="1">
    <source>
        <dbReference type="HAMAP-Rule" id="MF_01347"/>
    </source>
</evidence>
<evidence type="ECO:0000305" key="2"/>
<dbReference type="EC" id="7.1.2.2" evidence="1"/>
<dbReference type="EMBL" id="AJ235522">
    <property type="protein sequence ID" value="CAB89716.1"/>
    <property type="molecule type" value="Genomic_DNA"/>
</dbReference>
<dbReference type="EMBL" id="DQ899947">
    <property type="protein sequence ID" value="ABI32516.1"/>
    <property type="molecule type" value="Genomic_DNA"/>
</dbReference>
<dbReference type="RefSeq" id="YP_740209.1">
    <property type="nucleotide sequence ID" value="NC_008326.1"/>
</dbReference>
<dbReference type="SMR" id="Q9MU43"/>
<dbReference type="GeneID" id="4266631"/>
<dbReference type="GO" id="GO:0009535">
    <property type="term" value="C:chloroplast thylakoid membrane"/>
    <property type="evidence" value="ECO:0007669"/>
    <property type="project" value="UniProtKB-SubCell"/>
</dbReference>
<dbReference type="GO" id="GO:0005739">
    <property type="term" value="C:mitochondrion"/>
    <property type="evidence" value="ECO:0007669"/>
    <property type="project" value="GOC"/>
</dbReference>
<dbReference type="GO" id="GO:0045259">
    <property type="term" value="C:proton-transporting ATP synthase complex"/>
    <property type="evidence" value="ECO:0007669"/>
    <property type="project" value="UniProtKB-KW"/>
</dbReference>
<dbReference type="GO" id="GO:0005524">
    <property type="term" value="F:ATP binding"/>
    <property type="evidence" value="ECO:0007669"/>
    <property type="project" value="UniProtKB-UniRule"/>
</dbReference>
<dbReference type="GO" id="GO:0016887">
    <property type="term" value="F:ATP hydrolysis activity"/>
    <property type="evidence" value="ECO:0007669"/>
    <property type="project" value="InterPro"/>
</dbReference>
<dbReference type="GO" id="GO:0046933">
    <property type="term" value="F:proton-transporting ATP synthase activity, rotational mechanism"/>
    <property type="evidence" value="ECO:0007669"/>
    <property type="project" value="UniProtKB-UniRule"/>
</dbReference>
<dbReference type="GO" id="GO:0042776">
    <property type="term" value="P:proton motive force-driven mitochondrial ATP synthesis"/>
    <property type="evidence" value="ECO:0007669"/>
    <property type="project" value="TreeGrafter"/>
</dbReference>
<dbReference type="CDD" id="cd18110">
    <property type="entry name" value="ATP-synt_F1_beta_C"/>
    <property type="match status" value="1"/>
</dbReference>
<dbReference type="CDD" id="cd18115">
    <property type="entry name" value="ATP-synt_F1_beta_N"/>
    <property type="match status" value="1"/>
</dbReference>
<dbReference type="CDD" id="cd01133">
    <property type="entry name" value="F1-ATPase_beta_CD"/>
    <property type="match status" value="1"/>
</dbReference>
<dbReference type="FunFam" id="1.10.1140.10:FF:000001">
    <property type="entry name" value="ATP synthase subunit beta"/>
    <property type="match status" value="1"/>
</dbReference>
<dbReference type="FunFam" id="3.40.50.300:FF:000004">
    <property type="entry name" value="ATP synthase subunit beta"/>
    <property type="match status" value="1"/>
</dbReference>
<dbReference type="FunFam" id="2.40.10.170:FF:000002">
    <property type="entry name" value="ATP synthase subunit beta, chloroplastic"/>
    <property type="match status" value="1"/>
</dbReference>
<dbReference type="Gene3D" id="2.40.10.170">
    <property type="match status" value="1"/>
</dbReference>
<dbReference type="Gene3D" id="1.10.1140.10">
    <property type="entry name" value="Bovine Mitochondrial F1-atpase, Atp Synthase Beta Chain, Chain D, domain 3"/>
    <property type="match status" value="1"/>
</dbReference>
<dbReference type="Gene3D" id="3.40.50.300">
    <property type="entry name" value="P-loop containing nucleotide triphosphate hydrolases"/>
    <property type="match status" value="1"/>
</dbReference>
<dbReference type="HAMAP" id="MF_01347">
    <property type="entry name" value="ATP_synth_beta_bact"/>
    <property type="match status" value="1"/>
</dbReference>
<dbReference type="InterPro" id="IPR003593">
    <property type="entry name" value="AAA+_ATPase"/>
</dbReference>
<dbReference type="InterPro" id="IPR055190">
    <property type="entry name" value="ATP-synt_VA_C"/>
</dbReference>
<dbReference type="InterPro" id="IPR005722">
    <property type="entry name" value="ATP_synth_F1_bsu"/>
</dbReference>
<dbReference type="InterPro" id="IPR020003">
    <property type="entry name" value="ATPase_a/bsu_AS"/>
</dbReference>
<dbReference type="InterPro" id="IPR050053">
    <property type="entry name" value="ATPase_alpha/beta_chains"/>
</dbReference>
<dbReference type="InterPro" id="IPR004100">
    <property type="entry name" value="ATPase_F1/V1/A1_a/bsu_N"/>
</dbReference>
<dbReference type="InterPro" id="IPR036121">
    <property type="entry name" value="ATPase_F1/V1/A1_a/bsu_N_sf"/>
</dbReference>
<dbReference type="InterPro" id="IPR000194">
    <property type="entry name" value="ATPase_F1/V1/A1_a/bsu_nucl-bd"/>
</dbReference>
<dbReference type="InterPro" id="IPR024034">
    <property type="entry name" value="ATPase_F1/V1_b/a_C"/>
</dbReference>
<dbReference type="InterPro" id="IPR027417">
    <property type="entry name" value="P-loop_NTPase"/>
</dbReference>
<dbReference type="NCBIfam" id="TIGR01039">
    <property type="entry name" value="atpD"/>
    <property type="match status" value="1"/>
</dbReference>
<dbReference type="PANTHER" id="PTHR15184">
    <property type="entry name" value="ATP SYNTHASE"/>
    <property type="match status" value="1"/>
</dbReference>
<dbReference type="PANTHER" id="PTHR15184:SF71">
    <property type="entry name" value="ATP SYNTHASE SUBUNIT BETA, MITOCHONDRIAL"/>
    <property type="match status" value="1"/>
</dbReference>
<dbReference type="Pfam" id="PF00006">
    <property type="entry name" value="ATP-synt_ab"/>
    <property type="match status" value="1"/>
</dbReference>
<dbReference type="Pfam" id="PF02874">
    <property type="entry name" value="ATP-synt_ab_N"/>
    <property type="match status" value="1"/>
</dbReference>
<dbReference type="Pfam" id="PF22919">
    <property type="entry name" value="ATP-synt_VA_C"/>
    <property type="match status" value="1"/>
</dbReference>
<dbReference type="SMART" id="SM00382">
    <property type="entry name" value="AAA"/>
    <property type="match status" value="1"/>
</dbReference>
<dbReference type="SUPFAM" id="SSF47917">
    <property type="entry name" value="C-terminal domain of alpha and beta subunits of F1 ATP synthase"/>
    <property type="match status" value="1"/>
</dbReference>
<dbReference type="SUPFAM" id="SSF50615">
    <property type="entry name" value="N-terminal domain of alpha and beta subunits of F1 ATP synthase"/>
    <property type="match status" value="1"/>
</dbReference>
<dbReference type="SUPFAM" id="SSF52540">
    <property type="entry name" value="P-loop containing nucleoside triphosphate hydrolases"/>
    <property type="match status" value="1"/>
</dbReference>
<dbReference type="PROSITE" id="PS00152">
    <property type="entry name" value="ATPASE_ALPHA_BETA"/>
    <property type="match status" value="1"/>
</dbReference>
<proteinExistence type="inferred from homology"/>
<reference key="1">
    <citation type="journal article" date="2000" name="Syst. Biol.">
        <title>Phylogenetics of flowering plants based upon a combined analysis of plastid atpB and rbcL gene sequences.</title>
        <authorList>
            <person name="Savolainen V."/>
            <person name="Chase M.W."/>
            <person name="Morton C.M."/>
            <person name="Hoot S.B."/>
            <person name="Soltis D.E."/>
            <person name="Bayer C."/>
            <person name="Fay M.F."/>
            <person name="de Bruijn A."/>
            <person name="Sullivan S."/>
            <person name="Qiu Y.-L."/>
        </authorList>
    </citation>
    <scope>NUCLEOTIDE SEQUENCE [GENOMIC DNA]</scope>
</reference>
<reference key="2">
    <citation type="journal article" date="2006" name="BMC Evol. Biol.">
        <title>Complete plastid genome sequences of Drimys, Liriodendron, and Piper: implications for the phylogenetic relationships of magnoliids.</title>
        <authorList>
            <person name="Cai Z."/>
            <person name="Penaflor C."/>
            <person name="Kuehl J.V."/>
            <person name="Leebens-Mack J."/>
            <person name="Carlson J.E."/>
            <person name="dePamphilis C.W."/>
            <person name="Boore J.L."/>
            <person name="Jansen R.K."/>
        </authorList>
    </citation>
    <scope>NUCLEOTIDE SEQUENCE [LARGE SCALE GENOMIC DNA]</scope>
</reference>
<name>ATPB_LIRTU</name>